<proteinExistence type="inferred from homology"/>
<organism>
    <name type="scientific">Mycobacterium avium (strain 104)</name>
    <dbReference type="NCBI Taxonomy" id="243243"/>
    <lineage>
        <taxon>Bacteria</taxon>
        <taxon>Bacillati</taxon>
        <taxon>Actinomycetota</taxon>
        <taxon>Actinomycetes</taxon>
        <taxon>Mycobacteriales</taxon>
        <taxon>Mycobacteriaceae</taxon>
        <taxon>Mycobacterium</taxon>
        <taxon>Mycobacterium avium complex (MAC)</taxon>
    </lineage>
</organism>
<dbReference type="EC" id="1.1.1.37" evidence="1"/>
<dbReference type="EMBL" id="CP000479">
    <property type="protein sequence ID" value="ABK67674.1"/>
    <property type="molecule type" value="Genomic_DNA"/>
</dbReference>
<dbReference type="RefSeq" id="WP_009975594.1">
    <property type="nucleotide sequence ID" value="NC_008595.1"/>
</dbReference>
<dbReference type="SMR" id="A0QCI6"/>
<dbReference type="KEGG" id="mav:MAV_1380"/>
<dbReference type="HOGENOM" id="CLU_040727_2_0_11"/>
<dbReference type="Proteomes" id="UP000001574">
    <property type="component" value="Chromosome"/>
</dbReference>
<dbReference type="GO" id="GO:0030060">
    <property type="term" value="F:L-malate dehydrogenase (NAD+) activity"/>
    <property type="evidence" value="ECO:0007669"/>
    <property type="project" value="UniProtKB-UniRule"/>
</dbReference>
<dbReference type="GO" id="GO:0006108">
    <property type="term" value="P:malate metabolic process"/>
    <property type="evidence" value="ECO:0007669"/>
    <property type="project" value="InterPro"/>
</dbReference>
<dbReference type="GO" id="GO:0006099">
    <property type="term" value="P:tricarboxylic acid cycle"/>
    <property type="evidence" value="ECO:0007669"/>
    <property type="project" value="UniProtKB-UniRule"/>
</dbReference>
<dbReference type="CDD" id="cd01338">
    <property type="entry name" value="MDH_chloroplast-like"/>
    <property type="match status" value="1"/>
</dbReference>
<dbReference type="FunFam" id="3.40.50.720:FF:000010">
    <property type="entry name" value="Malate dehydrogenase"/>
    <property type="match status" value="1"/>
</dbReference>
<dbReference type="FunFam" id="3.90.110.10:FF:000002">
    <property type="entry name" value="Malate dehydrogenase"/>
    <property type="match status" value="1"/>
</dbReference>
<dbReference type="Gene3D" id="3.90.110.10">
    <property type="entry name" value="Lactate dehydrogenase/glycoside hydrolase, family 4, C-terminal"/>
    <property type="match status" value="1"/>
</dbReference>
<dbReference type="Gene3D" id="3.40.50.720">
    <property type="entry name" value="NAD(P)-binding Rossmann-like Domain"/>
    <property type="match status" value="1"/>
</dbReference>
<dbReference type="HAMAP" id="MF_01517">
    <property type="entry name" value="Malate_dehydrog_2"/>
    <property type="match status" value="1"/>
</dbReference>
<dbReference type="InterPro" id="IPR001557">
    <property type="entry name" value="L-lactate/malate_DH"/>
</dbReference>
<dbReference type="InterPro" id="IPR022383">
    <property type="entry name" value="Lactate/malate_DH_C"/>
</dbReference>
<dbReference type="InterPro" id="IPR001236">
    <property type="entry name" value="Lactate/malate_DH_N"/>
</dbReference>
<dbReference type="InterPro" id="IPR015955">
    <property type="entry name" value="Lactate_DH/Glyco_Ohase_4_C"/>
</dbReference>
<dbReference type="InterPro" id="IPR001252">
    <property type="entry name" value="Malate_DH_AS"/>
</dbReference>
<dbReference type="InterPro" id="IPR010945">
    <property type="entry name" value="Malate_DH_type2"/>
</dbReference>
<dbReference type="InterPro" id="IPR036291">
    <property type="entry name" value="NAD(P)-bd_dom_sf"/>
</dbReference>
<dbReference type="NCBIfam" id="TIGR01759">
    <property type="entry name" value="MalateDH-SF1"/>
    <property type="match status" value="1"/>
</dbReference>
<dbReference type="NCBIfam" id="NF003916">
    <property type="entry name" value="PRK05442.1"/>
    <property type="match status" value="1"/>
</dbReference>
<dbReference type="PANTHER" id="PTHR23382">
    <property type="entry name" value="MALATE DEHYDROGENASE"/>
    <property type="match status" value="1"/>
</dbReference>
<dbReference type="Pfam" id="PF02866">
    <property type="entry name" value="Ldh_1_C"/>
    <property type="match status" value="1"/>
</dbReference>
<dbReference type="Pfam" id="PF00056">
    <property type="entry name" value="Ldh_1_N"/>
    <property type="match status" value="1"/>
</dbReference>
<dbReference type="PIRSF" id="PIRSF000102">
    <property type="entry name" value="Lac_mal_DH"/>
    <property type="match status" value="1"/>
</dbReference>
<dbReference type="SUPFAM" id="SSF56327">
    <property type="entry name" value="LDH C-terminal domain-like"/>
    <property type="match status" value="1"/>
</dbReference>
<dbReference type="SUPFAM" id="SSF51735">
    <property type="entry name" value="NAD(P)-binding Rossmann-fold domains"/>
    <property type="match status" value="1"/>
</dbReference>
<dbReference type="PROSITE" id="PS00068">
    <property type="entry name" value="MDH"/>
    <property type="match status" value="1"/>
</dbReference>
<reference key="1">
    <citation type="submission" date="2006-10" db="EMBL/GenBank/DDBJ databases">
        <authorList>
            <person name="Fleischmann R.D."/>
            <person name="Dodson R.J."/>
            <person name="Haft D.H."/>
            <person name="Merkel J.S."/>
            <person name="Nelson W.C."/>
            <person name="Fraser C.M."/>
        </authorList>
    </citation>
    <scope>NUCLEOTIDE SEQUENCE [LARGE SCALE GENOMIC DNA]</scope>
    <source>
        <strain>104</strain>
    </source>
</reference>
<gene>
    <name evidence="1" type="primary">mdh</name>
    <name type="ordered locus">MAV_1380</name>
</gene>
<accession>A0QCI6</accession>
<comment type="function">
    <text evidence="1">Catalyzes the reversible oxidation of malate to oxaloacetate.</text>
</comment>
<comment type="catalytic activity">
    <reaction evidence="1">
        <text>(S)-malate + NAD(+) = oxaloacetate + NADH + H(+)</text>
        <dbReference type="Rhea" id="RHEA:21432"/>
        <dbReference type="ChEBI" id="CHEBI:15378"/>
        <dbReference type="ChEBI" id="CHEBI:15589"/>
        <dbReference type="ChEBI" id="CHEBI:16452"/>
        <dbReference type="ChEBI" id="CHEBI:57540"/>
        <dbReference type="ChEBI" id="CHEBI:57945"/>
        <dbReference type="EC" id="1.1.1.37"/>
    </reaction>
</comment>
<comment type="similarity">
    <text evidence="1">Belongs to the LDH/MDH superfamily. MDH type 2 family.</text>
</comment>
<sequence length="329" mass="34604">MSASPLKVAVTGAAGQIGYSLLFRLASGSLLGPDRPIELRLLEIEPALKALEGVVMELDDCAFPLLSGVEIGADPNKIFDGANLALLVGARPRGPGMERSDLLEANGAIFTAQGKALNEVAADDIRVGVTGNPANTNALIAMSNAPDIPRERFSALTRLDHNRAISQLAKKTGAKVTDITKMTIWGNHSATQYPDIFHAEVKGKNAAEVVGDQNWIENDFIPTVAKRGAAIIDARGASSAASAASATTDAARDWLLGTPAGDWVSMAVISDGSYGVPEGLISSFPVTTKDGDWTIVQGLEIDEFSRSRIDKTTAELADERNAVTQLGLI</sequence>
<evidence type="ECO:0000255" key="1">
    <source>
        <dbReference type="HAMAP-Rule" id="MF_01517"/>
    </source>
</evidence>
<name>MDH_MYCA1</name>
<protein>
    <recommendedName>
        <fullName evidence="1">Malate dehydrogenase</fullName>
        <ecNumber evidence="1">1.1.1.37</ecNumber>
    </recommendedName>
</protein>
<keyword id="KW-0520">NAD</keyword>
<keyword id="KW-0560">Oxidoreductase</keyword>
<keyword id="KW-0816">Tricarboxylic acid cycle</keyword>
<feature type="chain" id="PRO_0000294392" description="Malate dehydrogenase">
    <location>
        <begin position="1"/>
        <end position="329"/>
    </location>
</feature>
<feature type="active site" description="Proton acceptor" evidence="1">
    <location>
        <position position="188"/>
    </location>
</feature>
<feature type="binding site" evidence="1">
    <location>
        <begin position="12"/>
        <end position="18"/>
    </location>
    <ligand>
        <name>NAD(+)</name>
        <dbReference type="ChEBI" id="CHEBI:57540"/>
    </ligand>
</feature>
<feature type="binding site" evidence="1">
    <location>
        <position position="93"/>
    </location>
    <ligand>
        <name>substrate</name>
    </ligand>
</feature>
<feature type="binding site" evidence="1">
    <location>
        <position position="99"/>
    </location>
    <ligand>
        <name>substrate</name>
    </ligand>
</feature>
<feature type="binding site" evidence="1">
    <location>
        <position position="106"/>
    </location>
    <ligand>
        <name>NAD(+)</name>
        <dbReference type="ChEBI" id="CHEBI:57540"/>
    </ligand>
</feature>
<feature type="binding site" evidence="1">
    <location>
        <position position="113"/>
    </location>
    <ligand>
        <name>NAD(+)</name>
        <dbReference type="ChEBI" id="CHEBI:57540"/>
    </ligand>
</feature>
<feature type="binding site" evidence="1">
    <location>
        <begin position="130"/>
        <end position="132"/>
    </location>
    <ligand>
        <name>NAD(+)</name>
        <dbReference type="ChEBI" id="CHEBI:57540"/>
    </ligand>
</feature>
<feature type="binding site" evidence="1">
    <location>
        <position position="132"/>
    </location>
    <ligand>
        <name>substrate</name>
    </ligand>
</feature>
<feature type="binding site" evidence="1">
    <location>
        <position position="163"/>
    </location>
    <ligand>
        <name>substrate</name>
    </ligand>
</feature>